<keyword id="KW-0067">ATP-binding</keyword>
<keyword id="KW-0963">Cytoplasm</keyword>
<keyword id="KW-0235">DNA replication</keyword>
<keyword id="KW-0238">DNA-binding</keyword>
<keyword id="KW-0446">Lipid-binding</keyword>
<keyword id="KW-0547">Nucleotide-binding</keyword>
<feature type="chain" id="PRO_1000048613" description="Chromosomal replication initiator protein DnaA">
    <location>
        <begin position="1"/>
        <end position="525"/>
    </location>
</feature>
<feature type="region of interest" description="Domain I, interacts with DnaA modulators" evidence="1">
    <location>
        <begin position="1"/>
        <end position="71"/>
    </location>
</feature>
<feature type="region of interest" description="Domain II" evidence="1">
    <location>
        <begin position="71"/>
        <end position="188"/>
    </location>
</feature>
<feature type="region of interest" description="Disordered" evidence="2">
    <location>
        <begin position="162"/>
        <end position="182"/>
    </location>
</feature>
<feature type="region of interest" description="Domain III, AAA+ region" evidence="1">
    <location>
        <begin position="189"/>
        <end position="405"/>
    </location>
</feature>
<feature type="region of interest" description="Domain IV, binds dsDNA" evidence="1">
    <location>
        <begin position="406"/>
        <end position="525"/>
    </location>
</feature>
<feature type="compositionally biased region" description="Low complexity" evidence="2">
    <location>
        <begin position="169"/>
        <end position="181"/>
    </location>
</feature>
<feature type="binding site" evidence="1">
    <location>
        <position position="233"/>
    </location>
    <ligand>
        <name>ATP</name>
        <dbReference type="ChEBI" id="CHEBI:30616"/>
    </ligand>
</feature>
<feature type="binding site" evidence="1">
    <location>
        <position position="235"/>
    </location>
    <ligand>
        <name>ATP</name>
        <dbReference type="ChEBI" id="CHEBI:30616"/>
    </ligand>
</feature>
<feature type="binding site" evidence="1">
    <location>
        <position position="236"/>
    </location>
    <ligand>
        <name>ATP</name>
        <dbReference type="ChEBI" id="CHEBI:30616"/>
    </ligand>
</feature>
<feature type="binding site" evidence="1">
    <location>
        <position position="237"/>
    </location>
    <ligand>
        <name>ATP</name>
        <dbReference type="ChEBI" id="CHEBI:30616"/>
    </ligand>
</feature>
<organism>
    <name type="scientific">Burkholderia cenocepacia (strain HI2424)</name>
    <dbReference type="NCBI Taxonomy" id="331272"/>
    <lineage>
        <taxon>Bacteria</taxon>
        <taxon>Pseudomonadati</taxon>
        <taxon>Pseudomonadota</taxon>
        <taxon>Betaproteobacteria</taxon>
        <taxon>Burkholderiales</taxon>
        <taxon>Burkholderiaceae</taxon>
        <taxon>Burkholderia</taxon>
        <taxon>Burkholderia cepacia complex</taxon>
    </lineage>
</organism>
<name>DNAA_BURCH</name>
<gene>
    <name evidence="1" type="primary">dnaA</name>
    <name type="ordered locus">Bcen2424_0001</name>
</gene>
<evidence type="ECO:0000255" key="1">
    <source>
        <dbReference type="HAMAP-Rule" id="MF_00377"/>
    </source>
</evidence>
<evidence type="ECO:0000256" key="2">
    <source>
        <dbReference type="SAM" id="MobiDB-lite"/>
    </source>
</evidence>
<reference key="1">
    <citation type="submission" date="2006-08" db="EMBL/GenBank/DDBJ databases">
        <title>Complete sequence of chromosome 1 of Burkholderia cenocepacia HI2424.</title>
        <authorList>
            <person name="Copeland A."/>
            <person name="Lucas S."/>
            <person name="Lapidus A."/>
            <person name="Barry K."/>
            <person name="Detter J.C."/>
            <person name="Glavina del Rio T."/>
            <person name="Hammon N."/>
            <person name="Israni S."/>
            <person name="Pitluck S."/>
            <person name="Chain P."/>
            <person name="Malfatti S."/>
            <person name="Shin M."/>
            <person name="Vergez L."/>
            <person name="Schmutz J."/>
            <person name="Larimer F."/>
            <person name="Land M."/>
            <person name="Hauser L."/>
            <person name="Kyrpides N."/>
            <person name="Kim E."/>
            <person name="LiPuma J.J."/>
            <person name="Gonzalez C.F."/>
            <person name="Konstantinidis K."/>
            <person name="Tiedje J.M."/>
            <person name="Richardson P."/>
        </authorList>
    </citation>
    <scope>NUCLEOTIDE SEQUENCE [LARGE SCALE GENOMIC DNA]</scope>
    <source>
        <strain>HI2424</strain>
    </source>
</reference>
<proteinExistence type="inferred from homology"/>
<dbReference type="EMBL" id="CP000458">
    <property type="protein sequence ID" value="ABK06755.1"/>
    <property type="molecule type" value="Genomic_DNA"/>
</dbReference>
<dbReference type="RefSeq" id="WP_011694007.1">
    <property type="nucleotide sequence ID" value="NC_008542.1"/>
</dbReference>
<dbReference type="SMR" id="A0K2M8"/>
<dbReference type="KEGG" id="bch:Bcen2424_0001"/>
<dbReference type="HOGENOM" id="CLU_026910_0_1_4"/>
<dbReference type="GO" id="GO:0005737">
    <property type="term" value="C:cytoplasm"/>
    <property type="evidence" value="ECO:0007669"/>
    <property type="project" value="UniProtKB-SubCell"/>
</dbReference>
<dbReference type="GO" id="GO:0005886">
    <property type="term" value="C:plasma membrane"/>
    <property type="evidence" value="ECO:0007669"/>
    <property type="project" value="TreeGrafter"/>
</dbReference>
<dbReference type="GO" id="GO:0005524">
    <property type="term" value="F:ATP binding"/>
    <property type="evidence" value="ECO:0007669"/>
    <property type="project" value="UniProtKB-UniRule"/>
</dbReference>
<dbReference type="GO" id="GO:0016887">
    <property type="term" value="F:ATP hydrolysis activity"/>
    <property type="evidence" value="ECO:0007669"/>
    <property type="project" value="InterPro"/>
</dbReference>
<dbReference type="GO" id="GO:0003688">
    <property type="term" value="F:DNA replication origin binding"/>
    <property type="evidence" value="ECO:0007669"/>
    <property type="project" value="UniProtKB-UniRule"/>
</dbReference>
<dbReference type="GO" id="GO:0008289">
    <property type="term" value="F:lipid binding"/>
    <property type="evidence" value="ECO:0007669"/>
    <property type="project" value="UniProtKB-KW"/>
</dbReference>
<dbReference type="GO" id="GO:0006270">
    <property type="term" value="P:DNA replication initiation"/>
    <property type="evidence" value="ECO:0007669"/>
    <property type="project" value="UniProtKB-UniRule"/>
</dbReference>
<dbReference type="GO" id="GO:0006275">
    <property type="term" value="P:regulation of DNA replication"/>
    <property type="evidence" value="ECO:0007669"/>
    <property type="project" value="UniProtKB-UniRule"/>
</dbReference>
<dbReference type="CDD" id="cd00009">
    <property type="entry name" value="AAA"/>
    <property type="match status" value="1"/>
</dbReference>
<dbReference type="CDD" id="cd06571">
    <property type="entry name" value="Bac_DnaA_C"/>
    <property type="match status" value="1"/>
</dbReference>
<dbReference type="FunFam" id="1.10.8.60:FF:000003">
    <property type="entry name" value="Chromosomal replication initiator protein DnaA"/>
    <property type="match status" value="1"/>
</dbReference>
<dbReference type="FunFam" id="3.40.50.300:FF:000668">
    <property type="entry name" value="Chromosomal replication initiator protein DnaA"/>
    <property type="match status" value="1"/>
</dbReference>
<dbReference type="Gene3D" id="1.10.1750.10">
    <property type="match status" value="1"/>
</dbReference>
<dbReference type="Gene3D" id="1.10.8.60">
    <property type="match status" value="1"/>
</dbReference>
<dbReference type="Gene3D" id="3.30.300.180">
    <property type="match status" value="1"/>
</dbReference>
<dbReference type="Gene3D" id="3.40.50.300">
    <property type="entry name" value="P-loop containing nucleotide triphosphate hydrolases"/>
    <property type="match status" value="1"/>
</dbReference>
<dbReference type="HAMAP" id="MF_00377">
    <property type="entry name" value="DnaA_bact"/>
    <property type="match status" value="1"/>
</dbReference>
<dbReference type="InterPro" id="IPR003593">
    <property type="entry name" value="AAA+_ATPase"/>
</dbReference>
<dbReference type="InterPro" id="IPR001957">
    <property type="entry name" value="Chromosome_initiator_DnaA"/>
</dbReference>
<dbReference type="InterPro" id="IPR020591">
    <property type="entry name" value="Chromosome_initiator_DnaA-like"/>
</dbReference>
<dbReference type="InterPro" id="IPR018312">
    <property type="entry name" value="Chromosome_initiator_DnaA_CS"/>
</dbReference>
<dbReference type="InterPro" id="IPR013159">
    <property type="entry name" value="DnaA_C"/>
</dbReference>
<dbReference type="InterPro" id="IPR013317">
    <property type="entry name" value="DnaA_dom"/>
</dbReference>
<dbReference type="InterPro" id="IPR024633">
    <property type="entry name" value="DnaA_N_dom"/>
</dbReference>
<dbReference type="InterPro" id="IPR038454">
    <property type="entry name" value="DnaA_N_sf"/>
</dbReference>
<dbReference type="InterPro" id="IPR027417">
    <property type="entry name" value="P-loop_NTPase"/>
</dbReference>
<dbReference type="InterPro" id="IPR010921">
    <property type="entry name" value="Trp_repressor/repl_initiator"/>
</dbReference>
<dbReference type="NCBIfam" id="TIGR00362">
    <property type="entry name" value="DnaA"/>
    <property type="match status" value="1"/>
</dbReference>
<dbReference type="PANTHER" id="PTHR30050">
    <property type="entry name" value="CHROMOSOMAL REPLICATION INITIATOR PROTEIN DNAA"/>
    <property type="match status" value="1"/>
</dbReference>
<dbReference type="PANTHER" id="PTHR30050:SF2">
    <property type="entry name" value="CHROMOSOMAL REPLICATION INITIATOR PROTEIN DNAA"/>
    <property type="match status" value="1"/>
</dbReference>
<dbReference type="Pfam" id="PF00308">
    <property type="entry name" value="Bac_DnaA"/>
    <property type="match status" value="1"/>
</dbReference>
<dbReference type="Pfam" id="PF08299">
    <property type="entry name" value="Bac_DnaA_C"/>
    <property type="match status" value="1"/>
</dbReference>
<dbReference type="Pfam" id="PF11638">
    <property type="entry name" value="DnaA_N"/>
    <property type="match status" value="1"/>
</dbReference>
<dbReference type="PRINTS" id="PR00051">
    <property type="entry name" value="DNAA"/>
</dbReference>
<dbReference type="SMART" id="SM00382">
    <property type="entry name" value="AAA"/>
    <property type="match status" value="1"/>
</dbReference>
<dbReference type="SMART" id="SM00760">
    <property type="entry name" value="Bac_DnaA_C"/>
    <property type="match status" value="1"/>
</dbReference>
<dbReference type="SUPFAM" id="SSF52540">
    <property type="entry name" value="P-loop containing nucleoside triphosphate hydrolases"/>
    <property type="match status" value="1"/>
</dbReference>
<dbReference type="SUPFAM" id="SSF48295">
    <property type="entry name" value="TrpR-like"/>
    <property type="match status" value="1"/>
</dbReference>
<dbReference type="PROSITE" id="PS01008">
    <property type="entry name" value="DNAA"/>
    <property type="match status" value="1"/>
</dbReference>
<accession>A0K2M8</accession>
<sequence>MNDFWQHCSALLERELTPQQYVTWIKPLAPVAFDASANTLSIAAPNRFKLDWVKSQFSGRISDLAREFWNTPIEVQFVLDPKAGMRSAAASAAPAAPRAPLTPGGPAATVAAIAANLTANAAAAPSAPADVPMTPSAAAAHHLNADDADIDLPSLPAHEAAAGRRTWRPGPGAAPANGGEADSMYERSKLNPVLTFDNFVTGKANQLARAAAIQVADNPGISYNPLFLYGGVGLGKTHLIHAIGNQLLLDKAGARIRYIHAEQYVSDVVKAYQRKAFDDFKRYYHSLDLLLIDDIQFFSGKSRTQEEFFYAFEALVANKAQVIITSDTYPKEISGIDDRLISRFDSGLTVAIEPPELEMRVAILMRKAQSEGVNLSEDVAFFVAKHLRSNVRELEGALRKILAYSKFHGREISIELTKEALKDLLTVQNRQISVENIQKTVADFYNIKVADMYSKKRPANIARPRQIAMYLAKELTQKSLPEIGELFGGRDHTTVLHAVRKIADERSKDAQLNHELHVLEQTLKG</sequence>
<comment type="function">
    <text evidence="1">Plays an essential role in the initiation and regulation of chromosomal replication. ATP-DnaA binds to the origin of replication (oriC) to initiate formation of the DNA replication initiation complex once per cell cycle. Binds the DnaA box (a 9 base pair repeat at the origin) and separates the double-stranded (ds)DNA. Forms a right-handed helical filament on oriC DNA; dsDNA binds to the exterior of the filament while single-stranded (ss)DNA is stabiized in the filament's interior. The ATP-DnaA-oriC complex binds and stabilizes one strand of the AT-rich DNA unwinding element (DUE), permitting loading of DNA polymerase. After initiation quickly degrades to an ADP-DnaA complex that is not apt for DNA replication. Binds acidic phospholipids.</text>
</comment>
<comment type="subunit">
    <text evidence="1">Oligomerizes as a right-handed, spiral filament on DNA at oriC.</text>
</comment>
<comment type="subcellular location">
    <subcellularLocation>
        <location evidence="1">Cytoplasm</location>
    </subcellularLocation>
</comment>
<comment type="domain">
    <text evidence="1">Domain I is involved in oligomerization and binding regulators, domain II is flexibile and of varying length in different bacteria, domain III forms the AAA+ region, while domain IV binds dsDNA.</text>
</comment>
<comment type="similarity">
    <text evidence="1">Belongs to the DnaA family.</text>
</comment>
<protein>
    <recommendedName>
        <fullName evidence="1">Chromosomal replication initiator protein DnaA</fullName>
    </recommendedName>
</protein>